<protein>
    <recommendedName>
        <fullName evidence="1">Chromosome partition protein MukE</fullName>
    </recommendedName>
</protein>
<name>MUKE_HISS2</name>
<accession>B0UU63</accession>
<sequence>MTDSIQDLLSIKLARAIANPLFPEVDSQLRSGKHIGQEYLDNYSFLADFQHELDSFYRRYNVELIRAPEGFFYLRPKATTLIARSVLSELEMLVGKVLCYLYLSPERLAQQGIFTVQEVHDELINLADETKLLKAINLRAGGSDLDKQKLAEKVRSAISRLRRLGMIHAVGDQHSGKFTISESVFRFGAEVRSGDDPLEAQLRLIREGEAATAQSLQEEKNGLKDNMDQSAVENEQYFENEENEGIA</sequence>
<proteinExistence type="inferred from homology"/>
<dbReference type="EMBL" id="CP000947">
    <property type="protein sequence ID" value="ACA31077.1"/>
    <property type="molecule type" value="Genomic_DNA"/>
</dbReference>
<dbReference type="RefSeq" id="WP_012340496.1">
    <property type="nucleotide sequence ID" value="NC_010519.1"/>
</dbReference>
<dbReference type="SMR" id="B0UU63"/>
<dbReference type="STRING" id="228400.HSM_1340"/>
<dbReference type="GeneID" id="31487642"/>
<dbReference type="KEGG" id="hsm:HSM_1340"/>
<dbReference type="HOGENOM" id="CLU_1146408_0_0_6"/>
<dbReference type="GO" id="GO:0005737">
    <property type="term" value="C:cytoplasm"/>
    <property type="evidence" value="ECO:0007669"/>
    <property type="project" value="UniProtKB-UniRule"/>
</dbReference>
<dbReference type="GO" id="GO:0009295">
    <property type="term" value="C:nucleoid"/>
    <property type="evidence" value="ECO:0007669"/>
    <property type="project" value="UniProtKB-SubCell"/>
</dbReference>
<dbReference type="GO" id="GO:0051301">
    <property type="term" value="P:cell division"/>
    <property type="evidence" value="ECO:0007669"/>
    <property type="project" value="UniProtKB-KW"/>
</dbReference>
<dbReference type="GO" id="GO:0030261">
    <property type="term" value="P:chromosome condensation"/>
    <property type="evidence" value="ECO:0007669"/>
    <property type="project" value="UniProtKB-KW"/>
</dbReference>
<dbReference type="GO" id="GO:0007059">
    <property type="term" value="P:chromosome segregation"/>
    <property type="evidence" value="ECO:0007669"/>
    <property type="project" value="UniProtKB-UniRule"/>
</dbReference>
<dbReference type="GO" id="GO:0006260">
    <property type="term" value="P:DNA replication"/>
    <property type="evidence" value="ECO:0007669"/>
    <property type="project" value="UniProtKB-UniRule"/>
</dbReference>
<dbReference type="Gene3D" id="1.10.10.2250">
    <property type="match status" value="1"/>
</dbReference>
<dbReference type="Gene3D" id="1.10.10.2260">
    <property type="entry name" value="MukE-like family, C-terminal domain"/>
    <property type="match status" value="1"/>
</dbReference>
<dbReference type="HAMAP" id="MF_01802">
    <property type="entry name" value="MukE"/>
    <property type="match status" value="1"/>
</dbReference>
<dbReference type="InterPro" id="IPR042037">
    <property type="entry name" value="MukE_C"/>
</dbReference>
<dbReference type="InterPro" id="IPR042038">
    <property type="entry name" value="MukE_N"/>
</dbReference>
<dbReference type="InterPro" id="IPR007385">
    <property type="entry name" value="Scp_MukE"/>
</dbReference>
<dbReference type="NCBIfam" id="NF003602">
    <property type="entry name" value="PRK05256.1"/>
    <property type="match status" value="1"/>
</dbReference>
<dbReference type="Pfam" id="PF04288">
    <property type="entry name" value="MukE"/>
    <property type="match status" value="1"/>
</dbReference>
<gene>
    <name evidence="1" type="primary">mukE</name>
    <name type="ordered locus">HSM_1340</name>
</gene>
<comment type="function">
    <text evidence="1">Involved in chromosome condensation, segregation and cell cycle progression. May participate in facilitating chromosome segregation by condensation DNA from both sides of a centrally located replisome during cell division. Probably acts via its interaction with MukB and MukF.</text>
</comment>
<comment type="subunit">
    <text evidence="1">Interacts, and probably forms a ternary complex, with MukF and MukB. The complex formation is stimulated by calcium or magnesium.</text>
</comment>
<comment type="subcellular location">
    <subcellularLocation>
        <location evidence="1">Cytoplasm</location>
        <location evidence="1">Nucleoid</location>
    </subcellularLocation>
    <text evidence="1">Restricted to the nucleoid region.</text>
</comment>
<comment type="similarity">
    <text evidence="1">Belongs to the MukE family.</text>
</comment>
<organism>
    <name type="scientific">Histophilus somni (strain 2336)</name>
    <name type="common">Haemophilus somnus</name>
    <dbReference type="NCBI Taxonomy" id="228400"/>
    <lineage>
        <taxon>Bacteria</taxon>
        <taxon>Pseudomonadati</taxon>
        <taxon>Pseudomonadota</taxon>
        <taxon>Gammaproteobacteria</taxon>
        <taxon>Pasteurellales</taxon>
        <taxon>Pasteurellaceae</taxon>
        <taxon>Histophilus</taxon>
    </lineage>
</organism>
<evidence type="ECO:0000255" key="1">
    <source>
        <dbReference type="HAMAP-Rule" id="MF_01802"/>
    </source>
</evidence>
<evidence type="ECO:0000256" key="2">
    <source>
        <dbReference type="SAM" id="MobiDB-lite"/>
    </source>
</evidence>
<reference key="1">
    <citation type="submission" date="2008-02" db="EMBL/GenBank/DDBJ databases">
        <title>Complete sequence of Haemophilus somnus 2336.</title>
        <authorList>
            <consortium name="US DOE Joint Genome Institute"/>
            <person name="Siddaramappa S."/>
            <person name="Duncan A.J."/>
            <person name="Challacombe J.F."/>
            <person name="Rainey D."/>
            <person name="Gillaspy A.F."/>
            <person name="Carson M."/>
            <person name="Gipson J."/>
            <person name="Gipson M."/>
            <person name="Bruce D."/>
            <person name="Detter J.C."/>
            <person name="Han C.S."/>
            <person name="Land M."/>
            <person name="Tapia R."/>
            <person name="Thompson L.S."/>
            <person name="Orvis J."/>
            <person name="Zaitshik J."/>
            <person name="Barnes G."/>
            <person name="Brettin T.S."/>
            <person name="Dyer D.W."/>
            <person name="Inzana T.J."/>
        </authorList>
    </citation>
    <scope>NUCLEOTIDE SEQUENCE [LARGE SCALE GENOMIC DNA]</scope>
    <source>
        <strain>2336</strain>
    </source>
</reference>
<keyword id="KW-0131">Cell cycle</keyword>
<keyword id="KW-0132">Cell division</keyword>
<keyword id="KW-0159">Chromosome partition</keyword>
<keyword id="KW-0963">Cytoplasm</keyword>
<keyword id="KW-0226">DNA condensation</keyword>
<feature type="chain" id="PRO_1000088222" description="Chromosome partition protein MukE">
    <location>
        <begin position="1"/>
        <end position="247"/>
    </location>
</feature>
<feature type="region of interest" description="Disordered" evidence="2">
    <location>
        <begin position="213"/>
        <end position="247"/>
    </location>
</feature>
<feature type="compositionally biased region" description="Basic and acidic residues" evidence="2">
    <location>
        <begin position="217"/>
        <end position="227"/>
    </location>
</feature>
<feature type="compositionally biased region" description="Acidic residues" evidence="2">
    <location>
        <begin position="236"/>
        <end position="247"/>
    </location>
</feature>